<feature type="chain" id="PRO_0000255650" description="DNA integrity scanning protein DisA">
    <location>
        <begin position="1"/>
        <end position="374"/>
    </location>
</feature>
<feature type="domain" description="DAC" evidence="2">
    <location>
        <begin position="20"/>
        <end position="158"/>
    </location>
</feature>
<feature type="binding site" evidence="1">
    <location>
        <position position="87"/>
    </location>
    <ligand>
        <name>ATP</name>
        <dbReference type="ChEBI" id="CHEBI:30616"/>
    </ligand>
</feature>
<feature type="binding site" evidence="1">
    <location>
        <position position="105"/>
    </location>
    <ligand>
        <name>ATP</name>
        <dbReference type="ChEBI" id="CHEBI:30616"/>
    </ligand>
</feature>
<feature type="binding site" evidence="1">
    <location>
        <begin position="118"/>
        <end position="122"/>
    </location>
    <ligand>
        <name>ATP</name>
        <dbReference type="ChEBI" id="CHEBI:30616"/>
    </ligand>
</feature>
<dbReference type="EC" id="2.7.7.85" evidence="1"/>
<dbReference type="EMBL" id="BA000030">
    <property type="protein sequence ID" value="BAC72421.1"/>
    <property type="molecule type" value="Genomic_DNA"/>
</dbReference>
<dbReference type="RefSeq" id="WP_010986133.1">
    <property type="nucleotide sequence ID" value="NZ_JZJK01000054.1"/>
</dbReference>
<dbReference type="SMR" id="Q82EA6"/>
<dbReference type="GeneID" id="41541789"/>
<dbReference type="KEGG" id="sma:SAVERM_4709"/>
<dbReference type="eggNOG" id="COG1623">
    <property type="taxonomic scope" value="Bacteria"/>
</dbReference>
<dbReference type="HOGENOM" id="CLU_787128_0_0_11"/>
<dbReference type="OrthoDB" id="41841at2"/>
<dbReference type="Proteomes" id="UP000000428">
    <property type="component" value="Chromosome"/>
</dbReference>
<dbReference type="GO" id="GO:0004016">
    <property type="term" value="F:adenylate cyclase activity"/>
    <property type="evidence" value="ECO:0007669"/>
    <property type="project" value="TreeGrafter"/>
</dbReference>
<dbReference type="GO" id="GO:0005524">
    <property type="term" value="F:ATP binding"/>
    <property type="evidence" value="ECO:0007669"/>
    <property type="project" value="UniProtKB-UniRule"/>
</dbReference>
<dbReference type="GO" id="GO:0140097">
    <property type="term" value="F:catalytic activity, acting on DNA"/>
    <property type="evidence" value="ECO:0007669"/>
    <property type="project" value="UniProtKB-ARBA"/>
</dbReference>
<dbReference type="GO" id="GO:0106408">
    <property type="term" value="F:diadenylate cyclase activity"/>
    <property type="evidence" value="ECO:0007669"/>
    <property type="project" value="UniProtKB-EC"/>
</dbReference>
<dbReference type="GO" id="GO:0003677">
    <property type="term" value="F:DNA binding"/>
    <property type="evidence" value="ECO:0007669"/>
    <property type="project" value="UniProtKB-UniRule"/>
</dbReference>
<dbReference type="GO" id="GO:0016787">
    <property type="term" value="F:hydrolase activity"/>
    <property type="evidence" value="ECO:0007669"/>
    <property type="project" value="UniProtKB-ARBA"/>
</dbReference>
<dbReference type="GO" id="GO:0006281">
    <property type="term" value="P:DNA repair"/>
    <property type="evidence" value="ECO:0007669"/>
    <property type="project" value="UniProtKB-UniRule"/>
</dbReference>
<dbReference type="FunFam" id="1.10.150.20:FF:000016">
    <property type="entry name" value="DNA integrity scanning protein DisA"/>
    <property type="match status" value="1"/>
</dbReference>
<dbReference type="FunFam" id="1.20.1260.110:FF:000002">
    <property type="entry name" value="DNA integrity scanning protein DisA"/>
    <property type="match status" value="1"/>
</dbReference>
<dbReference type="FunFam" id="3.40.1700.10:FF:000001">
    <property type="entry name" value="DNA integrity scanning protein DisA"/>
    <property type="match status" value="1"/>
</dbReference>
<dbReference type="Gene3D" id="1.10.150.20">
    <property type="entry name" value="5' to 3' exonuclease, C-terminal subdomain"/>
    <property type="match status" value="1"/>
</dbReference>
<dbReference type="Gene3D" id="1.20.1260.110">
    <property type="entry name" value="DNA integrity scanning linker region"/>
    <property type="match status" value="1"/>
</dbReference>
<dbReference type="Gene3D" id="3.40.1700.10">
    <property type="entry name" value="DNA integrity scanning protein, DisA, N-terminal domain"/>
    <property type="match status" value="1"/>
</dbReference>
<dbReference type="HAMAP" id="MF_01438">
    <property type="entry name" value="DisA"/>
    <property type="match status" value="1"/>
</dbReference>
<dbReference type="InterPro" id="IPR050338">
    <property type="entry name" value="DisA"/>
</dbReference>
<dbReference type="InterPro" id="IPR038331">
    <property type="entry name" value="DisA_sf"/>
</dbReference>
<dbReference type="InterPro" id="IPR036888">
    <property type="entry name" value="DNA_integrity_DisA_N_sf"/>
</dbReference>
<dbReference type="InterPro" id="IPR018906">
    <property type="entry name" value="DNA_integrity_scan_DisA_link"/>
</dbReference>
<dbReference type="InterPro" id="IPR003390">
    <property type="entry name" value="DNA_integrity_scan_DisA_N"/>
</dbReference>
<dbReference type="InterPro" id="IPR023763">
    <property type="entry name" value="DNA_integrity_scanning_protein"/>
</dbReference>
<dbReference type="InterPro" id="IPR000445">
    <property type="entry name" value="HhH_motif"/>
</dbReference>
<dbReference type="InterPro" id="IPR010994">
    <property type="entry name" value="RuvA_2-like"/>
</dbReference>
<dbReference type="NCBIfam" id="NF010009">
    <property type="entry name" value="PRK13482.1"/>
    <property type="match status" value="1"/>
</dbReference>
<dbReference type="PANTHER" id="PTHR34185">
    <property type="entry name" value="DIADENYLATE CYCLASE"/>
    <property type="match status" value="1"/>
</dbReference>
<dbReference type="PANTHER" id="PTHR34185:SF3">
    <property type="entry name" value="DNA INTEGRITY SCANNING PROTEIN DISA"/>
    <property type="match status" value="1"/>
</dbReference>
<dbReference type="Pfam" id="PF02457">
    <property type="entry name" value="DAC"/>
    <property type="match status" value="1"/>
</dbReference>
<dbReference type="Pfam" id="PF10635">
    <property type="entry name" value="DisA-linker"/>
    <property type="match status" value="1"/>
</dbReference>
<dbReference type="Pfam" id="PF00633">
    <property type="entry name" value="HHH"/>
    <property type="match status" value="1"/>
</dbReference>
<dbReference type="SUPFAM" id="SSF47781">
    <property type="entry name" value="RuvA domain 2-like"/>
    <property type="match status" value="1"/>
</dbReference>
<dbReference type="SUPFAM" id="SSF143597">
    <property type="entry name" value="YojJ-like"/>
    <property type="match status" value="1"/>
</dbReference>
<dbReference type="PROSITE" id="PS51794">
    <property type="entry name" value="DAC"/>
    <property type="match status" value="1"/>
</dbReference>
<keyword id="KW-0067">ATP-binding</keyword>
<keyword id="KW-0227">DNA damage</keyword>
<keyword id="KW-0234">DNA repair</keyword>
<keyword id="KW-0238">DNA-binding</keyword>
<keyword id="KW-0460">Magnesium</keyword>
<keyword id="KW-0547">Nucleotide-binding</keyword>
<keyword id="KW-0548">Nucleotidyltransferase</keyword>
<keyword id="KW-1185">Reference proteome</keyword>
<keyword id="KW-0808">Transferase</keyword>
<organism>
    <name type="scientific">Streptomyces avermitilis (strain ATCC 31267 / DSM 46492 / JCM 5070 / NBRC 14893 / NCIMB 12804 / NRRL 8165 / MA-4680)</name>
    <dbReference type="NCBI Taxonomy" id="227882"/>
    <lineage>
        <taxon>Bacteria</taxon>
        <taxon>Bacillati</taxon>
        <taxon>Actinomycetota</taxon>
        <taxon>Actinomycetes</taxon>
        <taxon>Kitasatosporales</taxon>
        <taxon>Streptomycetaceae</taxon>
        <taxon>Streptomyces</taxon>
    </lineage>
</organism>
<gene>
    <name evidence="1" type="primary">disA</name>
    <name type="ordered locus">SAV_4709</name>
</gene>
<evidence type="ECO:0000255" key="1">
    <source>
        <dbReference type="HAMAP-Rule" id="MF_01438"/>
    </source>
</evidence>
<evidence type="ECO:0000255" key="2">
    <source>
        <dbReference type="PROSITE-ProRule" id="PRU01130"/>
    </source>
</evidence>
<sequence>MAANDRAAAPGKSGGSSGADGLMRASLSAVAPGTALRDGLERILRGNTGGLIVLGSDKTVEAMCTGGFVLDVEFTATRLRELCKLDGGIVLSSDLSKILRAGVQLVPDPMIPTEETGTRHRTADRVSKQVGFPVVSVSQSMRLVALYVDGMRRVLEDSAAILSRANQALATLERYKLRLDEVAGTLSALEIEDLVTVRDVSAVAQRLEMVRRIATEIAEYVVELGTDGRLLALQLDELIAGVEPERELVVRDYVPEPTAKRSRTVDQALYELDALTHAELLELATVAKALGYTGSPEALDSAVSPRGFRLLAKVPRLPGAIIDRLVEHFGGLQKLLAASVDDLQTVDGVGEARARSVREGLSRLAESSILERYV</sequence>
<protein>
    <recommendedName>
        <fullName evidence="1">DNA integrity scanning protein DisA</fullName>
    </recommendedName>
    <alternativeName>
        <fullName evidence="1">Cyclic di-AMP synthase</fullName>
        <shortName evidence="1">c-di-AMP synthase</shortName>
    </alternativeName>
    <alternativeName>
        <fullName evidence="1">Diadenylate cyclase</fullName>
        <ecNumber evidence="1">2.7.7.85</ecNumber>
    </alternativeName>
</protein>
<proteinExistence type="inferred from homology"/>
<reference key="1">
    <citation type="journal article" date="2001" name="Proc. Natl. Acad. Sci. U.S.A.">
        <title>Genome sequence of an industrial microorganism Streptomyces avermitilis: deducing the ability of producing secondary metabolites.</title>
        <authorList>
            <person name="Omura S."/>
            <person name="Ikeda H."/>
            <person name="Ishikawa J."/>
            <person name="Hanamoto A."/>
            <person name="Takahashi C."/>
            <person name="Shinose M."/>
            <person name="Takahashi Y."/>
            <person name="Horikawa H."/>
            <person name="Nakazawa H."/>
            <person name="Osonoe T."/>
            <person name="Kikuchi H."/>
            <person name="Shiba T."/>
            <person name="Sakaki Y."/>
            <person name="Hattori M."/>
        </authorList>
    </citation>
    <scope>NUCLEOTIDE SEQUENCE [LARGE SCALE GENOMIC DNA]</scope>
    <source>
        <strain>ATCC 31267 / DSM 46492 / JCM 5070 / NBRC 14893 / NCIMB 12804 / NRRL 8165 / MA-4680</strain>
    </source>
</reference>
<reference key="2">
    <citation type="journal article" date="2003" name="Nat. Biotechnol.">
        <title>Complete genome sequence and comparative analysis of the industrial microorganism Streptomyces avermitilis.</title>
        <authorList>
            <person name="Ikeda H."/>
            <person name="Ishikawa J."/>
            <person name="Hanamoto A."/>
            <person name="Shinose M."/>
            <person name="Kikuchi H."/>
            <person name="Shiba T."/>
            <person name="Sakaki Y."/>
            <person name="Hattori M."/>
            <person name="Omura S."/>
        </authorList>
    </citation>
    <scope>NUCLEOTIDE SEQUENCE [LARGE SCALE GENOMIC DNA]</scope>
    <source>
        <strain>ATCC 31267 / DSM 46492 / JCM 5070 / NBRC 14893 / NCIMB 12804 / NRRL 8165 / MA-4680</strain>
    </source>
</reference>
<accession>Q82EA6</accession>
<name>DISA_STRAW</name>
<comment type="function">
    <text evidence="1">Participates in a DNA-damage check-point that is active prior to asymmetric division when DNA is damaged. DisA forms globular foci that rapidly scan along the chromosomes during sporulation, searching for lesions. When a lesion is present, DisA pauses at the lesion site. This triggers a cellular response that culminates in a temporary block in sporulation initiation.</text>
</comment>
<comment type="function">
    <text evidence="1">Also has diadenylate cyclase activity, catalyzing the condensation of 2 ATP molecules into cyclic di-AMP (c-di-AMP). c-di-AMP acts as a signaling molecule that couples DNA integrity with progression of sporulation. The rise in c-di-AMP level generated by DisA while scanning the chromosome, operates as a positive signal that advances sporulation; upon encountering a lesion, the DisA focus arrests at the damaged site and halts c-di-AMP synthesis.</text>
</comment>
<comment type="catalytic activity">
    <reaction evidence="1">
        <text>2 ATP = 3',3'-c-di-AMP + 2 diphosphate</text>
        <dbReference type="Rhea" id="RHEA:35655"/>
        <dbReference type="ChEBI" id="CHEBI:30616"/>
        <dbReference type="ChEBI" id="CHEBI:33019"/>
        <dbReference type="ChEBI" id="CHEBI:71500"/>
        <dbReference type="EC" id="2.7.7.85"/>
    </reaction>
</comment>
<comment type="cofactor">
    <cofactor evidence="1">
        <name>Mg(2+)</name>
        <dbReference type="ChEBI" id="CHEBI:18420"/>
    </cofactor>
</comment>
<comment type="subunit">
    <text evidence="1">Homooctamer.</text>
</comment>
<comment type="similarity">
    <text evidence="1">Belongs to the DisA family.</text>
</comment>